<reference key="1">
    <citation type="submission" date="2005-01" db="EMBL/GenBank/DDBJ databases">
        <authorList>
            <consortium name="NIH - Xenopus Gene Collection (XGC) project"/>
        </authorList>
    </citation>
    <scope>NUCLEOTIDE SEQUENCE [LARGE SCALE MRNA]</scope>
    <source>
        <tissue>Egg</tissue>
    </source>
</reference>
<sequence length="509" mass="56213">MMSGQELAEVVQIAVEDLHSDHHPVELENHEVTEEDLSPTLKRQRIEINCQDPSIKSFLFSINQTICLRLDSIESKLQVLEATCKSLEEKLDLIMNKQPNPIQVPMVAGSPLGATQTWNKVRCVVPQTTVILNNERQSTSVTKLEAHEESINRTTETLENMLNSAVPGRRHNTIVVKVPAPEDSHNDDDNDSGSEASDTLSNCGNSSSNMGNNVTLITLNSEEDYPNGTWLGDEHNAEMRVRCPITAADMLHISTNCRTAEKMALTLLDYLFHREIQAVSNLSGQGKHGKKQLDPLMIYGIRCHLFNKFRITESDWYRIKQSIDSKCRTAWRRKQRGQSLTVKSFSRRTPSSSSYTTTEGVQNTVSSSSDLQQTSPQALHYALANAQQVQIHQIGEDGQVQVGHLHIAQVPQGEQVQITQDSEGNLQIHQVHVGQDGQVLQGAQLIAVASADPTTGVVDGSPLQANDIQVQYVQLAPVAESSATAQAVEPLQTALQPEMHIEHGAIQIQ</sequence>
<evidence type="ECO:0000250" key="1"/>
<evidence type="ECO:0000250" key="2">
    <source>
        <dbReference type="UniProtKB" id="Q8VBU8"/>
    </source>
</evidence>
<evidence type="ECO:0000255" key="3"/>
<evidence type="ECO:0000255" key="4">
    <source>
        <dbReference type="PROSITE-ProRule" id="PRU00784"/>
    </source>
</evidence>
<evidence type="ECO:0000256" key="5">
    <source>
        <dbReference type="SAM" id="MobiDB-lite"/>
    </source>
</evidence>
<evidence type="ECO:0000305" key="6"/>
<feature type="chain" id="PRO_0000297913" description="Protein BANP">
    <location>
        <begin position="1"/>
        <end position="509"/>
    </location>
</feature>
<feature type="domain" description="BEN" evidence="4">
    <location>
        <begin position="238"/>
        <end position="334"/>
    </location>
</feature>
<feature type="region of interest" description="Disordered" evidence="5">
    <location>
        <begin position="178"/>
        <end position="207"/>
    </location>
</feature>
<feature type="region of interest" description="Disordered" evidence="5">
    <location>
        <begin position="339"/>
        <end position="370"/>
    </location>
</feature>
<feature type="coiled-coil region" evidence="3">
    <location>
        <begin position="68"/>
        <end position="98"/>
    </location>
</feature>
<feature type="compositionally biased region" description="Low complexity" evidence="5">
    <location>
        <begin position="347"/>
        <end position="358"/>
    </location>
</feature>
<feature type="compositionally biased region" description="Polar residues" evidence="5">
    <location>
        <begin position="359"/>
        <end position="370"/>
    </location>
</feature>
<gene>
    <name type="primary">banp</name>
</gene>
<accession>Q5FWL0</accession>
<organism>
    <name type="scientific">Xenopus laevis</name>
    <name type="common">African clawed frog</name>
    <dbReference type="NCBI Taxonomy" id="8355"/>
    <lineage>
        <taxon>Eukaryota</taxon>
        <taxon>Metazoa</taxon>
        <taxon>Chordata</taxon>
        <taxon>Craniata</taxon>
        <taxon>Vertebrata</taxon>
        <taxon>Euteleostomi</taxon>
        <taxon>Amphibia</taxon>
        <taxon>Batrachia</taxon>
        <taxon>Anura</taxon>
        <taxon>Pipoidea</taxon>
        <taxon>Pipidae</taxon>
        <taxon>Xenopodinae</taxon>
        <taxon>Xenopus</taxon>
        <taxon>Xenopus</taxon>
    </lineage>
</organism>
<proteinExistence type="evidence at transcript level"/>
<keyword id="KW-0131">Cell cycle</keyword>
<keyword id="KW-0156">Chromatin regulator</keyword>
<keyword id="KW-0175">Coiled coil</keyword>
<keyword id="KW-0238">DNA-binding</keyword>
<keyword id="KW-0539">Nucleus</keyword>
<keyword id="KW-1185">Reference proteome</keyword>
<keyword id="KW-0678">Repressor</keyword>
<keyword id="KW-0804">Transcription</keyword>
<keyword id="KW-0805">Transcription regulation</keyword>
<dbReference type="EMBL" id="BC089297">
    <property type="protein sequence ID" value="AAH89297.1"/>
    <property type="molecule type" value="mRNA"/>
</dbReference>
<dbReference type="RefSeq" id="NP_001089263.1">
    <property type="nucleotide sequence ID" value="NM_001095794.1"/>
</dbReference>
<dbReference type="SMR" id="Q5FWL0"/>
<dbReference type="DNASU" id="734310"/>
<dbReference type="GeneID" id="734310"/>
<dbReference type="KEGG" id="xla:734310"/>
<dbReference type="AGR" id="Xenbase:XB-GENE-944409"/>
<dbReference type="CTD" id="734310"/>
<dbReference type="Xenbase" id="XB-GENE-944409">
    <property type="gene designation" value="banp.S"/>
</dbReference>
<dbReference type="OrthoDB" id="10052653at2759"/>
<dbReference type="Proteomes" id="UP000186698">
    <property type="component" value="Chromosome 4S"/>
</dbReference>
<dbReference type="Bgee" id="734310">
    <property type="expression patterns" value="Expressed in gastrula and 19 other cell types or tissues"/>
</dbReference>
<dbReference type="GO" id="GO:0005634">
    <property type="term" value="C:nucleus"/>
    <property type="evidence" value="ECO:0007669"/>
    <property type="project" value="UniProtKB-SubCell"/>
</dbReference>
<dbReference type="GO" id="GO:0003677">
    <property type="term" value="F:DNA binding"/>
    <property type="evidence" value="ECO:0007669"/>
    <property type="project" value="UniProtKB-KW"/>
</dbReference>
<dbReference type="GO" id="GO:0006325">
    <property type="term" value="P:chromatin organization"/>
    <property type="evidence" value="ECO:0007669"/>
    <property type="project" value="UniProtKB-KW"/>
</dbReference>
<dbReference type="GO" id="GO:0042177">
    <property type="term" value="P:negative regulation of protein catabolic process"/>
    <property type="evidence" value="ECO:0007669"/>
    <property type="project" value="TreeGrafter"/>
</dbReference>
<dbReference type="GO" id="GO:0034504">
    <property type="term" value="P:protein localization to nucleus"/>
    <property type="evidence" value="ECO:0007669"/>
    <property type="project" value="TreeGrafter"/>
</dbReference>
<dbReference type="FunFam" id="1.10.10.2590:FF:000001">
    <property type="entry name" value="protein BANP isoform X1"/>
    <property type="match status" value="1"/>
</dbReference>
<dbReference type="Gene3D" id="1.10.10.2590">
    <property type="entry name" value="BEN domain"/>
    <property type="match status" value="1"/>
</dbReference>
<dbReference type="InterPro" id="IPR042343">
    <property type="entry name" value="BANP"/>
</dbReference>
<dbReference type="InterPro" id="IPR018379">
    <property type="entry name" value="BEN_domain"/>
</dbReference>
<dbReference type="PANTHER" id="PTHR16243">
    <property type="entry name" value="BTG3-ASSOCIATED NUCLEAR PROTEIN BANP"/>
    <property type="match status" value="1"/>
</dbReference>
<dbReference type="PANTHER" id="PTHR16243:SF2">
    <property type="entry name" value="PROTEIN BANP"/>
    <property type="match status" value="1"/>
</dbReference>
<dbReference type="Pfam" id="PF10523">
    <property type="entry name" value="BEN"/>
    <property type="match status" value="1"/>
</dbReference>
<dbReference type="SMART" id="SM01025">
    <property type="entry name" value="BEN"/>
    <property type="match status" value="1"/>
</dbReference>
<dbReference type="PROSITE" id="PS51457">
    <property type="entry name" value="BEN"/>
    <property type="match status" value="1"/>
</dbReference>
<name>BANP_XENLA</name>
<comment type="function">
    <text evidence="1 2">DNA-binding protein which may repress cyclin D1 transcription by recruiting HDAC1 to its promoter, thereby diminishing H3K9ac, H3S10ph and H4K8ac levels. Promotes TP53 activation, which causes cell cycle arrest.</text>
</comment>
<comment type="subcellular location">
    <subcellularLocation>
        <location evidence="1">Nucleus</location>
    </subcellularLocation>
</comment>
<comment type="similarity">
    <text evidence="6">Belongs to the BANP/SMAR1 family.</text>
</comment>
<protein>
    <recommendedName>
        <fullName>Protein BANP</fullName>
    </recommendedName>
</protein>